<comment type="function">
    <text evidence="1">Component of the proteasome core, a large protease complex with broad specificity involved in protein degradation.</text>
</comment>
<comment type="catalytic activity">
    <reaction evidence="1">
        <text>Cleavage of peptide bonds with very broad specificity.</text>
        <dbReference type="EC" id="3.4.25.1"/>
    </reaction>
</comment>
<comment type="activity regulation">
    <text evidence="1">The formation of the proteasomal ATPase ARC-20S proteasome complex, likely via the docking of the C-termini of ARC into the intersubunit pockets in the alpha-rings, may trigger opening of the gate for substrate entry. Interconversion between the open-gate and close-gate conformations leads to a dynamic regulation of the 20S proteasome proteolysis activity.</text>
</comment>
<comment type="pathway">
    <text evidence="1">Protein degradation; proteasomal Pup-dependent pathway.</text>
</comment>
<comment type="subunit">
    <text evidence="1">The 20S proteasome core is composed of 14 alpha and 14 beta subunits that assemble into four stacked heptameric rings, resulting in a barrel-shaped structure. The two inner rings, each composed of seven catalytic beta subunits, are sandwiched by two outer rings, each composed of seven alpha subunits. The catalytic chamber with the active sites is on the inside of the barrel. Has a gated structure, the ends of the cylinder being occluded by the N-termini of the alpha-subunits. Is capped by the proteasome-associated ATPase, ARC.</text>
</comment>
<comment type="subcellular location">
    <subcellularLocation>
        <location evidence="1">Cytoplasm</location>
    </subcellularLocation>
</comment>
<comment type="similarity">
    <text evidence="1">Belongs to the peptidase T1B family.</text>
</comment>
<reference key="1">
    <citation type="submission" date="2006-12" db="EMBL/GenBank/DDBJ databases">
        <title>Complete sequence of Mycobacterium vanbaalenii PYR-1.</title>
        <authorList>
            <consortium name="US DOE Joint Genome Institute"/>
            <person name="Copeland A."/>
            <person name="Lucas S."/>
            <person name="Lapidus A."/>
            <person name="Barry K."/>
            <person name="Detter J.C."/>
            <person name="Glavina del Rio T."/>
            <person name="Hammon N."/>
            <person name="Israni S."/>
            <person name="Dalin E."/>
            <person name="Tice H."/>
            <person name="Pitluck S."/>
            <person name="Singan V."/>
            <person name="Schmutz J."/>
            <person name="Larimer F."/>
            <person name="Land M."/>
            <person name="Hauser L."/>
            <person name="Kyrpides N."/>
            <person name="Anderson I.J."/>
            <person name="Miller C."/>
            <person name="Richardson P."/>
        </authorList>
    </citation>
    <scope>NUCLEOTIDE SEQUENCE [LARGE SCALE GENOMIC DNA]</scope>
    <source>
        <strain>DSM 7251 / JCM 13017 / BCRC 16820 / KCTC 9966 / NRRL B-24157 / PYR-1</strain>
    </source>
</reference>
<sequence>MTWPNRDQPAFPSSSSGAFSALPQGVSHGGVNLSSFSDFLRHQAPHLLPGAPGPGPTGLPTDAVPHGTTIVALKCPGGVVMAGDRRATQGNMIASRDVQKVYITDDYTVTGIAGTAAIAVEFARLYAVELEHYEKLEGVALTFPGKVNRLATMVRGNLGAALQGFVALPLLAGYDLDDPNPEAAGRIVSFDAAGGWNFEEEGYQSVGSGSIFAKSSMKKLYSQVTDAESALRVAVEALYDAADDDSATGGPDLVRGIFPTAVVIGADGAHEVPEAKISSLCREVVENRSRTETFGPDARPTRGDEL</sequence>
<evidence type="ECO:0000255" key="1">
    <source>
        <dbReference type="HAMAP-Rule" id="MF_02113"/>
    </source>
</evidence>
<name>PSB_MYCVP</name>
<protein>
    <recommendedName>
        <fullName evidence="1">Proteasome subunit beta</fullName>
        <ecNumber evidence="1">3.4.25.1</ecNumber>
    </recommendedName>
    <alternativeName>
        <fullName evidence="1">20S proteasome beta subunit</fullName>
    </alternativeName>
    <alternativeName>
        <fullName evidence="1">Proteasome core protein PrcB</fullName>
    </alternativeName>
</protein>
<dbReference type="EC" id="3.4.25.1" evidence="1"/>
<dbReference type="EMBL" id="CP000511">
    <property type="protein sequence ID" value="ABM14244.1"/>
    <property type="molecule type" value="Genomic_DNA"/>
</dbReference>
<dbReference type="RefSeq" id="WP_011780648.1">
    <property type="nucleotide sequence ID" value="NZ_JACKSD010000223.1"/>
</dbReference>
<dbReference type="SMR" id="A1TAP4"/>
<dbReference type="STRING" id="350058.Mvan_3449"/>
<dbReference type="MEROPS" id="T01.005"/>
<dbReference type="KEGG" id="mva:Mvan_3449"/>
<dbReference type="eggNOG" id="COG0638">
    <property type="taxonomic scope" value="Bacteria"/>
</dbReference>
<dbReference type="HOGENOM" id="CLU_035750_2_0_11"/>
<dbReference type="UniPathway" id="UPA00997"/>
<dbReference type="Proteomes" id="UP000009159">
    <property type="component" value="Chromosome"/>
</dbReference>
<dbReference type="GO" id="GO:0005737">
    <property type="term" value="C:cytoplasm"/>
    <property type="evidence" value="ECO:0007669"/>
    <property type="project" value="UniProtKB-SubCell"/>
</dbReference>
<dbReference type="GO" id="GO:0019774">
    <property type="term" value="C:proteasome core complex, beta-subunit complex"/>
    <property type="evidence" value="ECO:0007669"/>
    <property type="project" value="UniProtKB-UniRule"/>
</dbReference>
<dbReference type="GO" id="GO:0004298">
    <property type="term" value="F:threonine-type endopeptidase activity"/>
    <property type="evidence" value="ECO:0007669"/>
    <property type="project" value="UniProtKB-UniRule"/>
</dbReference>
<dbReference type="GO" id="GO:0019941">
    <property type="term" value="P:modification-dependent protein catabolic process"/>
    <property type="evidence" value="ECO:0007669"/>
    <property type="project" value="UniProtKB-UniRule"/>
</dbReference>
<dbReference type="GO" id="GO:0010498">
    <property type="term" value="P:proteasomal protein catabolic process"/>
    <property type="evidence" value="ECO:0007669"/>
    <property type="project" value="UniProtKB-UniRule"/>
</dbReference>
<dbReference type="CDD" id="cd01906">
    <property type="entry name" value="proteasome_protease_HslV"/>
    <property type="match status" value="1"/>
</dbReference>
<dbReference type="FunFam" id="3.60.20.10:FF:000046">
    <property type="entry name" value="Proteasome subunit beta"/>
    <property type="match status" value="1"/>
</dbReference>
<dbReference type="Gene3D" id="3.60.20.10">
    <property type="entry name" value="Glutamine Phosphoribosylpyrophosphate, subunit 1, domain 1"/>
    <property type="match status" value="1"/>
</dbReference>
<dbReference type="HAMAP" id="MF_02113_B">
    <property type="entry name" value="Proteasome_B_B"/>
    <property type="match status" value="1"/>
</dbReference>
<dbReference type="InterPro" id="IPR029055">
    <property type="entry name" value="Ntn_hydrolases_N"/>
</dbReference>
<dbReference type="InterPro" id="IPR001353">
    <property type="entry name" value="Proteasome_sua/b"/>
</dbReference>
<dbReference type="InterPro" id="IPR023333">
    <property type="entry name" value="Proteasome_suB-type"/>
</dbReference>
<dbReference type="InterPro" id="IPR022483">
    <property type="entry name" value="PSB_actinobac"/>
</dbReference>
<dbReference type="NCBIfam" id="TIGR03690">
    <property type="entry name" value="20S_bact_beta"/>
    <property type="match status" value="1"/>
</dbReference>
<dbReference type="PANTHER" id="PTHR32194:SF0">
    <property type="entry name" value="ATP-DEPENDENT PROTEASE SUBUNIT HSLV"/>
    <property type="match status" value="1"/>
</dbReference>
<dbReference type="PANTHER" id="PTHR32194">
    <property type="entry name" value="METALLOPROTEASE TLDD"/>
    <property type="match status" value="1"/>
</dbReference>
<dbReference type="Pfam" id="PF00227">
    <property type="entry name" value="Proteasome"/>
    <property type="match status" value="1"/>
</dbReference>
<dbReference type="SUPFAM" id="SSF56235">
    <property type="entry name" value="N-terminal nucleophile aminohydrolases (Ntn hydrolases)"/>
    <property type="match status" value="1"/>
</dbReference>
<dbReference type="PROSITE" id="PS51476">
    <property type="entry name" value="PROTEASOME_BETA_2"/>
    <property type="match status" value="1"/>
</dbReference>
<proteinExistence type="inferred from homology"/>
<feature type="propeptide" id="PRO_0000397554" description="Removed in mature form; by autocatalysis" evidence="1">
    <location>
        <begin position="1"/>
        <end position="67"/>
    </location>
</feature>
<feature type="chain" id="PRO_0000397555" description="Proteasome subunit beta">
    <location>
        <begin position="68"/>
        <end position="306"/>
    </location>
</feature>
<feature type="active site" description="Nucleophile" evidence="1">
    <location>
        <position position="68"/>
    </location>
</feature>
<gene>
    <name evidence="1" type="primary">prcB</name>
    <name type="ordered locus">Mvan_3449</name>
</gene>
<accession>A1TAP4</accession>
<organism>
    <name type="scientific">Mycolicibacterium vanbaalenii (strain DSM 7251 / JCM 13017 / BCRC 16820 / KCTC 9966 / NRRL B-24157 / PYR-1)</name>
    <name type="common">Mycobacterium vanbaalenii</name>
    <dbReference type="NCBI Taxonomy" id="350058"/>
    <lineage>
        <taxon>Bacteria</taxon>
        <taxon>Bacillati</taxon>
        <taxon>Actinomycetota</taxon>
        <taxon>Actinomycetes</taxon>
        <taxon>Mycobacteriales</taxon>
        <taxon>Mycobacteriaceae</taxon>
        <taxon>Mycolicibacterium</taxon>
    </lineage>
</organism>
<keyword id="KW-0068">Autocatalytic cleavage</keyword>
<keyword id="KW-0963">Cytoplasm</keyword>
<keyword id="KW-0378">Hydrolase</keyword>
<keyword id="KW-0645">Protease</keyword>
<keyword id="KW-0647">Proteasome</keyword>
<keyword id="KW-0888">Threonine protease</keyword>
<keyword id="KW-0865">Zymogen</keyword>